<gene>
    <name type="primary">Shprh</name>
</gene>
<protein>
    <recommendedName>
        <fullName>E3 ubiquitin-protein ligase SHPRH</fullName>
        <ecNumber>2.3.2.27</ecNumber>
        <ecNumber>3.6.4.-</ecNumber>
    </recommendedName>
    <alternativeName>
        <fullName evidence="11">RING-type E3 ubiquitin transferase SHPRH</fullName>
    </alternativeName>
    <alternativeName>
        <fullName>SNF2, histone-linker, PHD and RING finger domain-containing helicase</fullName>
    </alternativeName>
</protein>
<name>SHPRH_MOUSE</name>
<reference key="1">
    <citation type="journal article" date="2003" name="Genomics">
        <title>Cloning and characterization of a novel gene, SHPRH, encoding a conserved putative protein with SNF2/helicase and PHD-finger domains from the 6q24 region.</title>
        <authorList>
            <person name="Sood R."/>
            <person name="Makalowska I."/>
            <person name="Galdzicki M."/>
            <person name="Hu P."/>
            <person name="Eddings E."/>
            <person name="Robbins C.M."/>
            <person name="Moses T."/>
            <person name="Namkoong J."/>
            <person name="Chen S."/>
            <person name="Trent J.M."/>
        </authorList>
    </citation>
    <scope>NUCLEOTIDE SEQUENCE [MRNA] (ISOFORMS 2 AND 4)</scope>
    <scope>TISSUE SPECIFICITY</scope>
    <source>
        <strain>BALB/cJ</strain>
    </source>
</reference>
<reference key="2">
    <citation type="journal article" date="2005" name="Science">
        <title>The transcriptional landscape of the mammalian genome.</title>
        <authorList>
            <person name="Carninci P."/>
            <person name="Kasukawa T."/>
            <person name="Katayama S."/>
            <person name="Gough J."/>
            <person name="Frith M.C."/>
            <person name="Maeda N."/>
            <person name="Oyama R."/>
            <person name="Ravasi T."/>
            <person name="Lenhard B."/>
            <person name="Wells C."/>
            <person name="Kodzius R."/>
            <person name="Shimokawa K."/>
            <person name="Bajic V.B."/>
            <person name="Brenner S.E."/>
            <person name="Batalov S."/>
            <person name="Forrest A.R."/>
            <person name="Zavolan M."/>
            <person name="Davis M.J."/>
            <person name="Wilming L.G."/>
            <person name="Aidinis V."/>
            <person name="Allen J.E."/>
            <person name="Ambesi-Impiombato A."/>
            <person name="Apweiler R."/>
            <person name="Aturaliya R.N."/>
            <person name="Bailey T.L."/>
            <person name="Bansal M."/>
            <person name="Baxter L."/>
            <person name="Beisel K.W."/>
            <person name="Bersano T."/>
            <person name="Bono H."/>
            <person name="Chalk A.M."/>
            <person name="Chiu K.P."/>
            <person name="Choudhary V."/>
            <person name="Christoffels A."/>
            <person name="Clutterbuck D.R."/>
            <person name="Crowe M.L."/>
            <person name="Dalla E."/>
            <person name="Dalrymple B.P."/>
            <person name="de Bono B."/>
            <person name="Della Gatta G."/>
            <person name="di Bernardo D."/>
            <person name="Down T."/>
            <person name="Engstrom P."/>
            <person name="Fagiolini M."/>
            <person name="Faulkner G."/>
            <person name="Fletcher C.F."/>
            <person name="Fukushima T."/>
            <person name="Furuno M."/>
            <person name="Futaki S."/>
            <person name="Gariboldi M."/>
            <person name="Georgii-Hemming P."/>
            <person name="Gingeras T.R."/>
            <person name="Gojobori T."/>
            <person name="Green R.E."/>
            <person name="Gustincich S."/>
            <person name="Harbers M."/>
            <person name="Hayashi Y."/>
            <person name="Hensch T.K."/>
            <person name="Hirokawa N."/>
            <person name="Hill D."/>
            <person name="Huminiecki L."/>
            <person name="Iacono M."/>
            <person name="Ikeo K."/>
            <person name="Iwama A."/>
            <person name="Ishikawa T."/>
            <person name="Jakt M."/>
            <person name="Kanapin A."/>
            <person name="Katoh M."/>
            <person name="Kawasawa Y."/>
            <person name="Kelso J."/>
            <person name="Kitamura H."/>
            <person name="Kitano H."/>
            <person name="Kollias G."/>
            <person name="Krishnan S.P."/>
            <person name="Kruger A."/>
            <person name="Kummerfeld S.K."/>
            <person name="Kurochkin I.V."/>
            <person name="Lareau L.F."/>
            <person name="Lazarevic D."/>
            <person name="Lipovich L."/>
            <person name="Liu J."/>
            <person name="Liuni S."/>
            <person name="McWilliam S."/>
            <person name="Madan Babu M."/>
            <person name="Madera M."/>
            <person name="Marchionni L."/>
            <person name="Matsuda H."/>
            <person name="Matsuzawa S."/>
            <person name="Miki H."/>
            <person name="Mignone F."/>
            <person name="Miyake S."/>
            <person name="Morris K."/>
            <person name="Mottagui-Tabar S."/>
            <person name="Mulder N."/>
            <person name="Nakano N."/>
            <person name="Nakauchi H."/>
            <person name="Ng P."/>
            <person name="Nilsson R."/>
            <person name="Nishiguchi S."/>
            <person name="Nishikawa S."/>
            <person name="Nori F."/>
            <person name="Ohara O."/>
            <person name="Okazaki Y."/>
            <person name="Orlando V."/>
            <person name="Pang K.C."/>
            <person name="Pavan W.J."/>
            <person name="Pavesi G."/>
            <person name="Pesole G."/>
            <person name="Petrovsky N."/>
            <person name="Piazza S."/>
            <person name="Reed J."/>
            <person name="Reid J.F."/>
            <person name="Ring B.Z."/>
            <person name="Ringwald M."/>
            <person name="Rost B."/>
            <person name="Ruan Y."/>
            <person name="Salzberg S.L."/>
            <person name="Sandelin A."/>
            <person name="Schneider C."/>
            <person name="Schoenbach C."/>
            <person name="Sekiguchi K."/>
            <person name="Semple C.A."/>
            <person name="Seno S."/>
            <person name="Sessa L."/>
            <person name="Sheng Y."/>
            <person name="Shibata Y."/>
            <person name="Shimada H."/>
            <person name="Shimada K."/>
            <person name="Silva D."/>
            <person name="Sinclair B."/>
            <person name="Sperling S."/>
            <person name="Stupka E."/>
            <person name="Sugiura K."/>
            <person name="Sultana R."/>
            <person name="Takenaka Y."/>
            <person name="Taki K."/>
            <person name="Tammoja K."/>
            <person name="Tan S.L."/>
            <person name="Tang S."/>
            <person name="Taylor M.S."/>
            <person name="Tegner J."/>
            <person name="Teichmann S.A."/>
            <person name="Ueda H.R."/>
            <person name="van Nimwegen E."/>
            <person name="Verardo R."/>
            <person name="Wei C.L."/>
            <person name="Yagi K."/>
            <person name="Yamanishi H."/>
            <person name="Zabarovsky E."/>
            <person name="Zhu S."/>
            <person name="Zimmer A."/>
            <person name="Hide W."/>
            <person name="Bult C."/>
            <person name="Grimmond S.M."/>
            <person name="Teasdale R.D."/>
            <person name="Liu E.T."/>
            <person name="Brusic V."/>
            <person name="Quackenbush J."/>
            <person name="Wahlestedt C."/>
            <person name="Mattick J.S."/>
            <person name="Hume D.A."/>
            <person name="Kai C."/>
            <person name="Sasaki D."/>
            <person name="Tomaru Y."/>
            <person name="Fukuda S."/>
            <person name="Kanamori-Katayama M."/>
            <person name="Suzuki M."/>
            <person name="Aoki J."/>
            <person name="Arakawa T."/>
            <person name="Iida J."/>
            <person name="Imamura K."/>
            <person name="Itoh M."/>
            <person name="Kato T."/>
            <person name="Kawaji H."/>
            <person name="Kawagashira N."/>
            <person name="Kawashima T."/>
            <person name="Kojima M."/>
            <person name="Kondo S."/>
            <person name="Konno H."/>
            <person name="Nakano K."/>
            <person name="Ninomiya N."/>
            <person name="Nishio T."/>
            <person name="Okada M."/>
            <person name="Plessy C."/>
            <person name="Shibata K."/>
            <person name="Shiraki T."/>
            <person name="Suzuki S."/>
            <person name="Tagami M."/>
            <person name="Waki K."/>
            <person name="Watahiki A."/>
            <person name="Okamura-Oho Y."/>
            <person name="Suzuki H."/>
            <person name="Kawai J."/>
            <person name="Hayashizaki Y."/>
        </authorList>
    </citation>
    <scope>NUCLEOTIDE SEQUENCE [LARGE SCALE MRNA] (ISOFORM 3)</scope>
    <source>
        <strain>C57BL/6J</strain>
        <tissue>Cerebellum</tissue>
        <tissue>Eye</tissue>
    </source>
</reference>
<reference key="3">
    <citation type="journal article" date="2004" name="Genome Res.">
        <title>The status, quality, and expansion of the NIH full-length cDNA project: the Mammalian Gene Collection (MGC).</title>
        <authorList>
            <consortium name="The MGC Project Team"/>
        </authorList>
    </citation>
    <scope>NUCLEOTIDE SEQUENCE [LARGE SCALE MRNA] (ISOFORM 1)</scope>
    <source>
        <strain>C57BL/6J</strain>
        <strain>FVB/N</strain>
        <tissue>Mammary tumor</tissue>
        <tissue>Retina</tissue>
    </source>
</reference>
<reference key="4">
    <citation type="journal article" date="2010" name="Cell">
        <title>A tissue-specific atlas of mouse protein phosphorylation and expression.</title>
        <authorList>
            <person name="Huttlin E.L."/>
            <person name="Jedrychowski M.P."/>
            <person name="Elias J.E."/>
            <person name="Goswami T."/>
            <person name="Rad R."/>
            <person name="Beausoleil S.A."/>
            <person name="Villen J."/>
            <person name="Haas W."/>
            <person name="Sowa M.E."/>
            <person name="Gygi S.P."/>
        </authorList>
    </citation>
    <scope>PHOSPHORYLATION [LARGE SCALE ANALYSIS] AT SER-259; SER-261 AND SER-626</scope>
    <scope>IDENTIFICATION BY MASS SPECTROMETRY [LARGE SCALE ANALYSIS]</scope>
    <source>
        <tissue>Kidney</tissue>
        <tissue>Spleen</tissue>
        <tissue>Testis</tissue>
    </source>
</reference>
<accession>Q7TPQ3</accession>
<accession>Q7TQ27</accession>
<accession>Q7TQ28</accession>
<accession>Q7TQ29</accession>
<accession>Q8BKE2</accession>
<accession>Q8BUW0</accession>
<accession>Q922Q3</accession>
<comment type="function">
    <text evidence="2">E3 ubiquitin-protein ligase involved in DNA repair. Upon genotoxic stress, accepts ubiquitin from the UBE2N-UBE2V2 E2 complex and transfers it to 'Lys-164' of PCNA which had been monoubiquitinated by UBE2A/B-RAD18, promoting the formation of non-canonical poly-ubiquitin chains linked through 'Lys-63'.</text>
</comment>
<comment type="catalytic activity">
    <reaction>
        <text>S-ubiquitinyl-[E2 ubiquitin-conjugating enzyme]-L-cysteine + [acceptor protein]-L-lysine = [E2 ubiquitin-conjugating enzyme]-L-cysteine + N(6)-ubiquitinyl-[acceptor protein]-L-lysine.</text>
        <dbReference type="EC" id="2.3.2.27"/>
    </reaction>
</comment>
<comment type="pathway">
    <text>Protein modification; protein ubiquitination.</text>
</comment>
<comment type="subunit">
    <text evidence="2">Homodimer. Interacts with HLTF, PCNA, UBE2N and RAD18.</text>
</comment>
<comment type="alternative products">
    <event type="alternative splicing"/>
    <isoform>
        <id>Q7TPQ3-1</id>
        <name>1</name>
        <sequence type="displayed"/>
    </isoform>
    <isoform>
        <id>Q7TPQ3-2</id>
        <name>2</name>
        <name>A</name>
        <sequence type="described" ref="VSP_024768"/>
    </isoform>
    <isoform>
        <id>Q7TPQ3-3</id>
        <name>3</name>
        <sequence type="described" ref="VSP_024766 VSP_024767"/>
    </isoform>
    <isoform>
        <id>Q7TPQ3-5</id>
        <name>4</name>
        <name>C</name>
        <sequence type="described" ref="VSP_024769 VSP_024770"/>
    </isoform>
</comment>
<comment type="tissue specificity">
    <text evidence="8">Broadly expressed (at protein level).</text>
</comment>
<comment type="domain">
    <text evidence="1">The RING finger mediates E3 ubiquitin ligase activity.</text>
</comment>
<comment type="similarity">
    <text evidence="11">Belongs to the SNF2/RAD54 helicase family.</text>
</comment>
<comment type="sequence caution" evidence="11">
    <conflict type="miscellaneous discrepancy">
        <sequence resource="EMBL-CDS" id="AAO26655"/>
    </conflict>
    <text>Probable cloning artifact.</text>
</comment>
<evidence type="ECO:0000250" key="1"/>
<evidence type="ECO:0000250" key="2">
    <source>
        <dbReference type="UniProtKB" id="Q149N8"/>
    </source>
</evidence>
<evidence type="ECO:0000255" key="3">
    <source>
        <dbReference type="PROSITE-ProRule" id="PRU00175"/>
    </source>
</evidence>
<evidence type="ECO:0000255" key="4">
    <source>
        <dbReference type="PROSITE-ProRule" id="PRU00541"/>
    </source>
</evidence>
<evidence type="ECO:0000255" key="5">
    <source>
        <dbReference type="PROSITE-ProRule" id="PRU00542"/>
    </source>
</evidence>
<evidence type="ECO:0000255" key="6">
    <source>
        <dbReference type="PROSITE-ProRule" id="PRU00837"/>
    </source>
</evidence>
<evidence type="ECO:0000256" key="7">
    <source>
        <dbReference type="SAM" id="MobiDB-lite"/>
    </source>
</evidence>
<evidence type="ECO:0000269" key="8">
    <source>
    </source>
</evidence>
<evidence type="ECO:0000303" key="9">
    <source>
    </source>
</evidence>
<evidence type="ECO:0000303" key="10">
    <source>
    </source>
</evidence>
<evidence type="ECO:0000305" key="11"/>
<evidence type="ECO:0007744" key="12">
    <source>
    </source>
</evidence>
<proteinExistence type="evidence at protein level"/>
<keyword id="KW-0025">Alternative splicing</keyword>
<keyword id="KW-0067">ATP-binding</keyword>
<keyword id="KW-0227">DNA damage</keyword>
<keyword id="KW-0234">DNA repair</keyword>
<keyword id="KW-0347">Helicase</keyword>
<keyword id="KW-0378">Hydrolase</keyword>
<keyword id="KW-0479">Metal-binding</keyword>
<keyword id="KW-0547">Nucleotide-binding</keyword>
<keyword id="KW-0597">Phosphoprotein</keyword>
<keyword id="KW-1185">Reference proteome</keyword>
<keyword id="KW-0808">Transferase</keyword>
<keyword id="KW-0833">Ubl conjugation pathway</keyword>
<keyword id="KW-0862">Zinc</keyword>
<keyword id="KW-0863">Zinc-finger</keyword>
<feature type="chain" id="PRO_0000284919" description="E3 ubiquitin-protein ligase SHPRH">
    <location>
        <begin position="1"/>
        <end position="1674"/>
    </location>
</feature>
<feature type="domain" description="Helicase ATP-binding; first part" evidence="4">
    <location>
        <begin position="302"/>
        <end position="384"/>
    </location>
</feature>
<feature type="domain" description="H15" evidence="6">
    <location>
        <begin position="433"/>
        <end position="507"/>
    </location>
</feature>
<feature type="domain" description="Helicase ATP-binding; second part" evidence="4">
    <location>
        <begin position="701"/>
        <end position="859"/>
    </location>
</feature>
<feature type="domain" description="Helicase C-terminal" evidence="5">
    <location>
        <begin position="1505"/>
        <end position="1663"/>
    </location>
</feature>
<feature type="zinc finger region" description="PHD-type">
    <location>
        <begin position="649"/>
        <end position="700"/>
    </location>
</feature>
<feature type="zinc finger region" description="RING-type" evidence="3">
    <location>
        <begin position="1423"/>
        <end position="1470"/>
    </location>
</feature>
<feature type="region of interest" description="Disordered" evidence="7">
    <location>
        <begin position="1"/>
        <end position="26"/>
    </location>
</feature>
<feature type="region of interest" description="Disordered" evidence="7">
    <location>
        <begin position="524"/>
        <end position="548"/>
    </location>
</feature>
<feature type="short sequence motif" description="DEAQ box">
    <location>
        <begin position="810"/>
        <end position="813"/>
    </location>
</feature>
<feature type="compositionally biased region" description="Basic and acidic residues" evidence="7">
    <location>
        <begin position="12"/>
        <end position="26"/>
    </location>
</feature>
<feature type="compositionally biased region" description="Basic and acidic residues" evidence="7">
    <location>
        <begin position="526"/>
        <end position="541"/>
    </location>
</feature>
<feature type="binding site" evidence="4">
    <location>
        <begin position="368"/>
        <end position="375"/>
    </location>
    <ligand>
        <name>ATP</name>
        <dbReference type="ChEBI" id="CHEBI:30616"/>
    </ligand>
</feature>
<feature type="modified residue" description="Phosphoserine" evidence="12">
    <location>
        <position position="259"/>
    </location>
</feature>
<feature type="modified residue" description="Phosphoserine" evidence="12">
    <location>
        <position position="261"/>
    </location>
</feature>
<feature type="modified residue" description="Phosphoserine" evidence="12">
    <location>
        <position position="626"/>
    </location>
</feature>
<feature type="splice variant" id="VSP_024766" description="In isoform 3." evidence="10">
    <original>EY</original>
    <variation>RR</variation>
    <location>
        <begin position="1030"/>
        <end position="1031"/>
    </location>
</feature>
<feature type="splice variant" id="VSP_024767" description="In isoform 3." evidence="10">
    <location>
        <begin position="1032"/>
        <end position="1674"/>
    </location>
</feature>
<feature type="splice variant" id="VSP_024768" description="In isoform 2." evidence="9">
    <location>
        <begin position="1617"/>
        <end position="1674"/>
    </location>
</feature>
<feature type="splice variant" id="VSP_024769" description="In isoform 4." evidence="9">
    <original>PTIVHRFLIKATIEERMQAMLKTAERSHTSSSGKHSEASVLTVAGL</original>
    <variation>SIRGLECLKTYRYTSTHDHTLSTYLVLLSI</variation>
    <location>
        <begin position="1617"/>
        <end position="1662"/>
    </location>
</feature>
<feature type="splice variant" id="VSP_024770" description="In isoform 4." evidence="9">
    <location>
        <begin position="1663"/>
        <end position="1674"/>
    </location>
</feature>
<feature type="sequence conflict" description="In Ref. 2; BAC38428." evidence="11" ref="2">
    <original>S</original>
    <variation>G</variation>
    <location>
        <position position="177"/>
    </location>
</feature>
<feature type="sequence conflict" description="In Ref. 2; BAC38428." evidence="11" ref="2">
    <original>Q</original>
    <variation>H</variation>
    <location>
        <position position="582"/>
    </location>
</feature>
<feature type="sequence conflict" description="In Ref. 2; BAC38428." evidence="11" ref="2">
    <original>Q</original>
    <variation>R</variation>
    <location>
        <position position="928"/>
    </location>
</feature>
<feature type="sequence conflict" description="In Ref. 1; AAO26654/AAO26655/AAO26656." evidence="11" ref="1">
    <original>V</original>
    <variation>I</variation>
    <location>
        <position position="1285"/>
    </location>
</feature>
<dbReference type="EC" id="2.3.2.27"/>
<dbReference type="EC" id="3.6.4.-"/>
<dbReference type="EMBL" id="AY162264">
    <property type="protein sequence ID" value="AAO26654.1"/>
    <property type="molecule type" value="mRNA"/>
</dbReference>
<dbReference type="EMBL" id="AY162265">
    <property type="protein sequence ID" value="AAO26655.1"/>
    <property type="status" value="ALT_SEQ"/>
    <property type="molecule type" value="mRNA"/>
</dbReference>
<dbReference type="EMBL" id="AY162266">
    <property type="protein sequence ID" value="AAO26656.1"/>
    <property type="molecule type" value="mRNA"/>
</dbReference>
<dbReference type="EMBL" id="AK053448">
    <property type="protein sequence ID" value="BAC35389.1"/>
    <property type="molecule type" value="mRNA"/>
</dbReference>
<dbReference type="EMBL" id="AK082160">
    <property type="protein sequence ID" value="BAC38428.1"/>
    <property type="molecule type" value="mRNA"/>
</dbReference>
<dbReference type="EMBL" id="BC006883">
    <property type="protein sequence ID" value="AAH06883.1"/>
    <property type="molecule type" value="mRNA"/>
</dbReference>
<dbReference type="EMBL" id="BC055003">
    <property type="protein sequence ID" value="AAH55003.1"/>
    <property type="molecule type" value="mRNA"/>
</dbReference>
<dbReference type="CCDS" id="CCDS35838.1">
    <molecule id="Q7TPQ3-1"/>
</dbReference>
<dbReference type="CCDS" id="CCDS35839.1">
    <molecule id="Q7TPQ3-2"/>
</dbReference>
<dbReference type="CCDS" id="CCDS70003.1">
    <molecule id="Q7TPQ3-5"/>
</dbReference>
<dbReference type="RefSeq" id="NP_001071175.1">
    <molecule id="Q7TPQ3-1"/>
    <property type="nucleotide sequence ID" value="NM_001077707.1"/>
</dbReference>
<dbReference type="RefSeq" id="NP_001271283.1">
    <molecule id="Q7TPQ3-5"/>
    <property type="nucleotide sequence ID" value="NM_001284354.1"/>
</dbReference>
<dbReference type="RefSeq" id="NP_766525.3">
    <molecule id="Q7TPQ3-2"/>
    <property type="nucleotide sequence ID" value="NM_172937.3"/>
</dbReference>
<dbReference type="RefSeq" id="XP_006512803.1">
    <molecule id="Q7TPQ3-1"/>
    <property type="nucleotide sequence ID" value="XM_006512740.5"/>
</dbReference>
<dbReference type="SMR" id="Q7TPQ3"/>
<dbReference type="BioGRID" id="234474">
    <property type="interactions" value="5"/>
</dbReference>
<dbReference type="FunCoup" id="Q7TPQ3">
    <property type="interactions" value="1284"/>
</dbReference>
<dbReference type="IntAct" id="Q7TPQ3">
    <property type="interactions" value="1"/>
</dbReference>
<dbReference type="STRING" id="10090.ENSMUSP00000039422"/>
<dbReference type="iPTMnet" id="Q7TPQ3"/>
<dbReference type="PhosphoSitePlus" id="Q7TPQ3"/>
<dbReference type="PaxDb" id="10090-ENSMUSP00000039422"/>
<dbReference type="PeptideAtlas" id="Q7TPQ3"/>
<dbReference type="ProteomicsDB" id="257156">
    <molecule id="Q7TPQ3-1"/>
</dbReference>
<dbReference type="ProteomicsDB" id="257157">
    <molecule id="Q7TPQ3-2"/>
</dbReference>
<dbReference type="ProteomicsDB" id="257158">
    <molecule id="Q7TPQ3-3"/>
</dbReference>
<dbReference type="ProteomicsDB" id="257159">
    <molecule id="Q7TPQ3-5"/>
</dbReference>
<dbReference type="Pumba" id="Q7TPQ3"/>
<dbReference type="Antibodypedia" id="33225">
    <property type="antibodies" value="309 antibodies from 25 providers"/>
</dbReference>
<dbReference type="DNASU" id="268281"/>
<dbReference type="Ensembl" id="ENSMUST00000044053.13">
    <molecule id="Q7TPQ3-1"/>
    <property type="protein sequence ID" value="ENSMUSP00000039422.7"/>
    <property type="gene ID" value="ENSMUSG00000090112.9"/>
</dbReference>
<dbReference type="Ensembl" id="ENSMUST00000054814.14">
    <molecule id="Q7TPQ3-2"/>
    <property type="protein sequence ID" value="ENSMUSP00000125849.2"/>
    <property type="gene ID" value="ENSMUSG00000090112.9"/>
</dbReference>
<dbReference type="Ensembl" id="ENSMUST00000159541.8">
    <molecule id="Q7TPQ3-5"/>
    <property type="protein sequence ID" value="ENSMUSP00000132870.2"/>
    <property type="gene ID" value="ENSMUSG00000090112.9"/>
</dbReference>
<dbReference type="Ensembl" id="ENSMUST00000159810.8">
    <molecule id="Q7TPQ3-3"/>
    <property type="protein sequence ID" value="ENSMUSP00000125457.2"/>
    <property type="gene ID" value="ENSMUSG00000090112.9"/>
</dbReference>
<dbReference type="GeneID" id="268281"/>
<dbReference type="KEGG" id="mmu:268281"/>
<dbReference type="UCSC" id="uc007ejp.1">
    <molecule id="Q7TPQ3-1"/>
    <property type="organism name" value="mouse"/>
</dbReference>
<dbReference type="UCSC" id="uc033fop.1">
    <molecule id="Q7TPQ3-5"/>
    <property type="organism name" value="mouse"/>
</dbReference>
<dbReference type="AGR" id="MGI:1917581"/>
<dbReference type="CTD" id="257218"/>
<dbReference type="MGI" id="MGI:1917581">
    <property type="gene designation" value="Shprh"/>
</dbReference>
<dbReference type="VEuPathDB" id="HostDB:ENSMUSG00000090112"/>
<dbReference type="eggNOG" id="KOG0298">
    <property type="taxonomic scope" value="Eukaryota"/>
</dbReference>
<dbReference type="GeneTree" id="ENSGT00730000111123"/>
<dbReference type="HOGENOM" id="CLU_314715_0_0_1"/>
<dbReference type="InParanoid" id="Q7TPQ3"/>
<dbReference type="OMA" id="FIIPEIM"/>
<dbReference type="OrthoDB" id="423559at2759"/>
<dbReference type="PhylomeDB" id="Q7TPQ3"/>
<dbReference type="TreeFam" id="TF324273"/>
<dbReference type="Reactome" id="R-MMU-8866654">
    <property type="pathway name" value="E3 ubiquitin ligases ubiquitinate target proteins"/>
</dbReference>
<dbReference type="UniPathway" id="UPA00143"/>
<dbReference type="BioGRID-ORCS" id="268281">
    <property type="hits" value="1 hit in 115 CRISPR screens"/>
</dbReference>
<dbReference type="ChiTaRS" id="Shprh">
    <property type="organism name" value="mouse"/>
</dbReference>
<dbReference type="PRO" id="PR:Q7TPQ3"/>
<dbReference type="Proteomes" id="UP000000589">
    <property type="component" value="Chromosome 10"/>
</dbReference>
<dbReference type="RNAct" id="Q7TPQ3">
    <property type="molecule type" value="protein"/>
</dbReference>
<dbReference type="Bgee" id="ENSMUSG00000090112">
    <property type="expression patterns" value="Expressed in secondary oocyte and 243 other cell types or tissues"/>
</dbReference>
<dbReference type="ExpressionAtlas" id="Q7TPQ3">
    <property type="expression patterns" value="baseline and differential"/>
</dbReference>
<dbReference type="GO" id="GO:0000786">
    <property type="term" value="C:nucleosome"/>
    <property type="evidence" value="ECO:0007669"/>
    <property type="project" value="InterPro"/>
</dbReference>
<dbReference type="GO" id="GO:0005634">
    <property type="term" value="C:nucleus"/>
    <property type="evidence" value="ECO:0007669"/>
    <property type="project" value="UniProtKB-ARBA"/>
</dbReference>
<dbReference type="GO" id="GO:0005524">
    <property type="term" value="F:ATP binding"/>
    <property type="evidence" value="ECO:0007669"/>
    <property type="project" value="UniProtKB-KW"/>
</dbReference>
<dbReference type="GO" id="GO:0003677">
    <property type="term" value="F:DNA binding"/>
    <property type="evidence" value="ECO:0007669"/>
    <property type="project" value="InterPro"/>
</dbReference>
<dbReference type="GO" id="GO:0004386">
    <property type="term" value="F:helicase activity"/>
    <property type="evidence" value="ECO:0007669"/>
    <property type="project" value="UniProtKB-KW"/>
</dbReference>
<dbReference type="GO" id="GO:0016787">
    <property type="term" value="F:hydrolase activity"/>
    <property type="evidence" value="ECO:0007669"/>
    <property type="project" value="UniProtKB-KW"/>
</dbReference>
<dbReference type="GO" id="GO:0031625">
    <property type="term" value="F:ubiquitin protein ligase binding"/>
    <property type="evidence" value="ECO:0000266"/>
    <property type="project" value="MGI"/>
</dbReference>
<dbReference type="GO" id="GO:0004842">
    <property type="term" value="F:ubiquitin-protein transferase activity"/>
    <property type="evidence" value="ECO:0007669"/>
    <property type="project" value="Ensembl"/>
</dbReference>
<dbReference type="GO" id="GO:0008270">
    <property type="term" value="F:zinc ion binding"/>
    <property type="evidence" value="ECO:0007669"/>
    <property type="project" value="UniProtKB-KW"/>
</dbReference>
<dbReference type="GO" id="GO:0006974">
    <property type="term" value="P:DNA damage response"/>
    <property type="evidence" value="ECO:0000266"/>
    <property type="project" value="MGI"/>
</dbReference>
<dbReference type="GO" id="GO:0006281">
    <property type="term" value="P:DNA repair"/>
    <property type="evidence" value="ECO:0007669"/>
    <property type="project" value="UniProtKB-KW"/>
</dbReference>
<dbReference type="GO" id="GO:0006334">
    <property type="term" value="P:nucleosome assembly"/>
    <property type="evidence" value="ECO:0007669"/>
    <property type="project" value="InterPro"/>
</dbReference>
<dbReference type="GO" id="GO:0000209">
    <property type="term" value="P:protein polyubiquitination"/>
    <property type="evidence" value="ECO:0007669"/>
    <property type="project" value="Ensembl"/>
</dbReference>
<dbReference type="CDD" id="cd18070">
    <property type="entry name" value="DEXQc_SHPRH"/>
    <property type="match status" value="1"/>
</dbReference>
<dbReference type="CDD" id="cd00073">
    <property type="entry name" value="H15"/>
    <property type="match status" value="1"/>
</dbReference>
<dbReference type="CDD" id="cd15547">
    <property type="entry name" value="PHD_SHPRH"/>
    <property type="match status" value="1"/>
</dbReference>
<dbReference type="CDD" id="cd16569">
    <property type="entry name" value="RING-HC_SHPRH-like"/>
    <property type="match status" value="1"/>
</dbReference>
<dbReference type="CDD" id="cd18793">
    <property type="entry name" value="SF2_C_SNF"/>
    <property type="match status" value="1"/>
</dbReference>
<dbReference type="FunFam" id="1.10.10.10:FF:000242">
    <property type="entry name" value="E3 ubiquitin-protein ligase SHPRH isoform X1"/>
    <property type="match status" value="1"/>
</dbReference>
<dbReference type="FunFam" id="3.30.40.10:FF:000162">
    <property type="entry name" value="E3 ubiquitin-protein ligase SHPRH isoform X1"/>
    <property type="match status" value="1"/>
</dbReference>
<dbReference type="FunFam" id="3.30.40.10:FF:000170">
    <property type="entry name" value="E3 ubiquitin-protein ligase SHPRH isoform X1"/>
    <property type="match status" value="1"/>
</dbReference>
<dbReference type="FunFam" id="3.40.50.300:FF:000786">
    <property type="entry name" value="E3 ubiquitin-protein ligase SHPRH isoform X1"/>
    <property type="match status" value="1"/>
</dbReference>
<dbReference type="FunFam" id="3.40.50.10810:FF:000013">
    <property type="entry name" value="E3 ubiquitin-protein ligase SHPRH isoform X2"/>
    <property type="match status" value="1"/>
</dbReference>
<dbReference type="Gene3D" id="3.40.50.300">
    <property type="entry name" value="P-loop containing nucleotide triphosphate hydrolases"/>
    <property type="match status" value="1"/>
</dbReference>
<dbReference type="Gene3D" id="3.40.50.10810">
    <property type="entry name" value="Tandem AAA-ATPase domain"/>
    <property type="match status" value="2"/>
</dbReference>
<dbReference type="Gene3D" id="1.10.10.10">
    <property type="entry name" value="Winged helix-like DNA-binding domain superfamily/Winged helix DNA-binding domain"/>
    <property type="match status" value="1"/>
</dbReference>
<dbReference type="Gene3D" id="3.30.40.10">
    <property type="entry name" value="Zinc/RING finger domain, C3HC4 (zinc finger)"/>
    <property type="match status" value="2"/>
</dbReference>
<dbReference type="InterPro" id="IPR052583">
    <property type="entry name" value="ATP-helicase/E3_Ub-Ligase"/>
</dbReference>
<dbReference type="InterPro" id="IPR014001">
    <property type="entry name" value="Helicase_ATP-bd"/>
</dbReference>
<dbReference type="InterPro" id="IPR001650">
    <property type="entry name" value="Helicase_C-like"/>
</dbReference>
<dbReference type="InterPro" id="IPR005818">
    <property type="entry name" value="Histone_H1/H5_H15"/>
</dbReference>
<dbReference type="InterPro" id="IPR027417">
    <property type="entry name" value="P-loop_NTPase"/>
</dbReference>
<dbReference type="InterPro" id="IPR048686">
    <property type="entry name" value="SHPRH_helical_1st"/>
</dbReference>
<dbReference type="InterPro" id="IPR048695">
    <property type="entry name" value="SHPRH_helical_2nd"/>
</dbReference>
<dbReference type="InterPro" id="IPR038718">
    <property type="entry name" value="SNF2-like_sf"/>
</dbReference>
<dbReference type="InterPro" id="IPR049730">
    <property type="entry name" value="SNF2/RAD54-like_C"/>
</dbReference>
<dbReference type="InterPro" id="IPR000330">
    <property type="entry name" value="SNF2_N"/>
</dbReference>
<dbReference type="InterPro" id="IPR036388">
    <property type="entry name" value="WH-like_DNA-bd_sf"/>
</dbReference>
<dbReference type="InterPro" id="IPR036390">
    <property type="entry name" value="WH_DNA-bd_sf"/>
</dbReference>
<dbReference type="InterPro" id="IPR019786">
    <property type="entry name" value="Zinc_finger_PHD-type_CS"/>
</dbReference>
<dbReference type="InterPro" id="IPR011011">
    <property type="entry name" value="Znf_FYVE_PHD"/>
</dbReference>
<dbReference type="InterPro" id="IPR001965">
    <property type="entry name" value="Znf_PHD"/>
</dbReference>
<dbReference type="InterPro" id="IPR001841">
    <property type="entry name" value="Znf_RING"/>
</dbReference>
<dbReference type="InterPro" id="IPR013083">
    <property type="entry name" value="Znf_RING/FYVE/PHD"/>
</dbReference>
<dbReference type="PANTHER" id="PTHR45865:SF1">
    <property type="entry name" value="E3 UBIQUITIN-PROTEIN LIGASE SHPRH"/>
    <property type="match status" value="1"/>
</dbReference>
<dbReference type="PANTHER" id="PTHR45865">
    <property type="entry name" value="E3 UBIQUITIN-PROTEIN LIGASE SHPRH FAMILY MEMBER"/>
    <property type="match status" value="1"/>
</dbReference>
<dbReference type="Pfam" id="PF00271">
    <property type="entry name" value="Helicase_C"/>
    <property type="match status" value="1"/>
</dbReference>
<dbReference type="Pfam" id="PF00538">
    <property type="entry name" value="Linker_histone"/>
    <property type="match status" value="1"/>
</dbReference>
<dbReference type="Pfam" id="PF21325">
    <property type="entry name" value="SHPRH_helical-1st"/>
    <property type="match status" value="1"/>
</dbReference>
<dbReference type="Pfam" id="PF21324">
    <property type="entry name" value="SHPRH_helical-2nd"/>
    <property type="match status" value="1"/>
</dbReference>
<dbReference type="Pfam" id="PF00176">
    <property type="entry name" value="SNF2-rel_dom"/>
    <property type="match status" value="1"/>
</dbReference>
<dbReference type="SMART" id="SM00487">
    <property type="entry name" value="DEXDc"/>
    <property type="match status" value="1"/>
</dbReference>
<dbReference type="SMART" id="SM00526">
    <property type="entry name" value="H15"/>
    <property type="match status" value="1"/>
</dbReference>
<dbReference type="SMART" id="SM00490">
    <property type="entry name" value="HELICc"/>
    <property type="match status" value="1"/>
</dbReference>
<dbReference type="SMART" id="SM00249">
    <property type="entry name" value="PHD"/>
    <property type="match status" value="1"/>
</dbReference>
<dbReference type="SUPFAM" id="SSF57903">
    <property type="entry name" value="FYVE/PHD zinc finger"/>
    <property type="match status" value="1"/>
</dbReference>
<dbReference type="SUPFAM" id="SSF52540">
    <property type="entry name" value="P-loop containing nucleoside triphosphate hydrolases"/>
    <property type="match status" value="3"/>
</dbReference>
<dbReference type="SUPFAM" id="SSF57850">
    <property type="entry name" value="RING/U-box"/>
    <property type="match status" value="1"/>
</dbReference>
<dbReference type="SUPFAM" id="SSF46785">
    <property type="entry name" value="Winged helix' DNA-binding domain"/>
    <property type="match status" value="1"/>
</dbReference>
<dbReference type="PROSITE" id="PS51504">
    <property type="entry name" value="H15"/>
    <property type="match status" value="1"/>
</dbReference>
<dbReference type="PROSITE" id="PS51192">
    <property type="entry name" value="HELICASE_ATP_BIND_1"/>
    <property type="match status" value="1"/>
</dbReference>
<dbReference type="PROSITE" id="PS51194">
    <property type="entry name" value="HELICASE_CTER"/>
    <property type="match status" value="1"/>
</dbReference>
<dbReference type="PROSITE" id="PS01359">
    <property type="entry name" value="ZF_PHD_1"/>
    <property type="match status" value="1"/>
</dbReference>
<dbReference type="PROSITE" id="PS50089">
    <property type="entry name" value="ZF_RING_2"/>
    <property type="match status" value="1"/>
</dbReference>
<sequence length="1674" mass="191490">MSSRRKRAPPMKVDEERQQQLHWNMHEDLRSEPLTMTVGEQACSDADSSSDCIIIDEGPPESALHRDKKRRSETVSVLEATEEETRLSVTLNVTVSPYRVDNSWKAFLGDFALQLLPKESLVEHFSERTFTLSPSESSSQFLIYVHSECKNVEKQENVLEGSAGVCSKGIRVESSFSSDMLQDLAWLQKRRGIKLYQRPDGTHTIKVGIYILEAGLTRLDFMSDAGSRMKKFNQLMKRVMEKLHNFIIPDVLEEEEEGSESEPEGQDIDELYHFVKQTHQQETRSVQVDVQHPALIPVLRPYQREAVNWMLQQEQFRSAPPADNSLHFLWREIVTPDGLKLYYNPYTGCIIRDFPHAGPQLLGGILADEMGLGKTVEVLALILTHTRQDVKQDALTLPEGKVVNYFIPTHCPREKVKNREIQDTEYEPKEKVHCPPTRVMILTAVKEMNGKKGVSILSIYKYVSSIFRYDVQRNRGLLKRMLKCLIFEGLVKQIKGHGFSGTFTLGKNYKEDVFDKTKKQAVGSPRKIEKELRKSVNKDADSEYLPSNTSDDDEPYYYYCKAGKSRSKLKKPALLTKKGKGQSVHLDSQGDAPAAGVCASTDVHVSENTCVSEDKQTQEAKDCAESPNPAAEELAQSNTSSPCETSDYRFECICGEFDQIGHKPRVQCLKCHLWQHAKCVNYEEKNLKVKPFYCPHCLVAMEPVSTRATLIISPSSICHQWVDEINRHVRSSSLRVLVYQGVKKHGFLQPHFLAEQDIVIITYDVLRSELNYVNIPHSNSEDGRRLRNQKRYMAIPSPLVAVEWWRICLDEAQMVECPTVKAAEMAQRLSGINRWCISGTPVQRGLEDLFGLVVFLGIEPYCVKHWWIRLLYHPYCKKNPQHLYSFIAKIMWRSAKKDVIDQIQIPPQTEEMHWLHFSPVERHFYHRQHEVCCQDAIVKLRKISDWALKLSSLDRRTVSSILYPLLRLRQACCHPQAVRGEFLPLQKSTMTMEELLTSLQKKCGTECEEAHRQLVCALNGLAGIHIIKGEYALAAELYREVLRSSEEHKGKLKTDSLQRLHATHNLMELLGAKHPGIPPTLRDGRLEEEAKQLREHYMSKCNTEVAEAQQALQPVQQSIRELQRKIHSNSPWWLNVIHRAMEFSVDEELVQRVRNEISSNYKQQTDKLSMSEKFRDCRGLQFLLTTQMEELHKFQKLVREAVKKLEKPPSREVIESATVCHLRPARLPLNCCVFCKADELFTEYESKLFFNTVKGQTAIFEEMIEDEEGLVDDRVPTTTRGLWAVSETERSMKAILSFARSHRFDVEYVDEGSVSMDLFEAWKKEYKLLHEYWMTLRNRVSAVDELAMATERLRVRHPKEPKPNPPVHHIIEPHEVEQNRIKLVNDKAVATSQLQKKLGQLLYLTNLEKSQDKTSGGINPEPCPICARQLGKQWAVLTCGHCFCNECTSIIIEQYSVGSHRSSIKCAICRQTTSHKEVSYVFTSEKANQEDDIPVKGSHSTKVEAVVRTLMKIQLRDPGAKALVFSTWQDVLDIISKALTDNNMEFTQISRIKTFQENLSAFKYDPHINILLLPLHTGSNGLTIIEATHVLLVEPILNPAHELQAIGRVHRIGQTKPTIVHRFLIKATIEERMQAMLKTAERSHTSSSGKHSEASVLTVAGLADLFTKENEELE</sequence>
<organism>
    <name type="scientific">Mus musculus</name>
    <name type="common">Mouse</name>
    <dbReference type="NCBI Taxonomy" id="10090"/>
    <lineage>
        <taxon>Eukaryota</taxon>
        <taxon>Metazoa</taxon>
        <taxon>Chordata</taxon>
        <taxon>Craniata</taxon>
        <taxon>Vertebrata</taxon>
        <taxon>Euteleostomi</taxon>
        <taxon>Mammalia</taxon>
        <taxon>Eutheria</taxon>
        <taxon>Euarchontoglires</taxon>
        <taxon>Glires</taxon>
        <taxon>Rodentia</taxon>
        <taxon>Myomorpha</taxon>
        <taxon>Muroidea</taxon>
        <taxon>Muridae</taxon>
        <taxon>Murinae</taxon>
        <taxon>Mus</taxon>
        <taxon>Mus</taxon>
    </lineage>
</organism>